<name>MURE_CORGL</name>
<sequence>MLDLTKLIDGILKGSAQGVPAHAVGEQAIAAIGLDSSSLPTSDAIFAAVPGTRTHGAQFAGTDNAAKAVAILTDAAGLEVLNEAGETRPVIVVDDVRAVLGAASSSIYGDPSKDFTLIGVTGTSGKTTTSYLLEKGLMEAGHKVGLIGTTGTRIDGEEVPTKLTTPEAPTLQALFARMRDHGVTHVVMEVSSHALSLGRVAGSHFDVAAFTNLSQDHLDFHPTMDDYFDAKALFFRADSPLVADKQVVCVDDSWGQRMASVAADVQTVSTLGQEADFSATDINVSDSGAQSFKINAPSNQSYQVELALPGAFNVANATLAFAAAARVGVDGEAFARGMSKVAVPGRMERIDEGQDFLAVVDYAHKPAAVAAVLDTLRTQIDGRLGVVIGAGGDRDSTKRGPMGQLSAQRADLVIVTDDNPRSEVPATIRAAVTAGAQQGASESERPVEVLEIGDRAEAIRVLVEWAQPGDGIVVAGKGHEVGQLVAGVTHHFDDREEVRAALTEKLNNKLPLTTEEG</sequence>
<comment type="function">
    <text evidence="1">Catalyzes the addition of meso-diaminopimelic acid to the nucleotide precursor UDP-N-acetylmuramoyl-L-alanyl-D-glutamate (UMAG) in the biosynthesis of bacterial cell-wall peptidoglycan.</text>
</comment>
<comment type="catalytic activity">
    <reaction evidence="1">
        <text>UDP-N-acetyl-alpha-D-muramoyl-L-alanyl-D-glutamate + meso-2,6-diaminopimelate + ATP = UDP-N-acetyl-alpha-D-muramoyl-L-alanyl-gamma-D-glutamyl-meso-2,6-diaminopimelate + ADP + phosphate + H(+)</text>
        <dbReference type="Rhea" id="RHEA:23676"/>
        <dbReference type="ChEBI" id="CHEBI:15378"/>
        <dbReference type="ChEBI" id="CHEBI:30616"/>
        <dbReference type="ChEBI" id="CHEBI:43474"/>
        <dbReference type="ChEBI" id="CHEBI:57791"/>
        <dbReference type="ChEBI" id="CHEBI:83900"/>
        <dbReference type="ChEBI" id="CHEBI:83905"/>
        <dbReference type="ChEBI" id="CHEBI:456216"/>
        <dbReference type="EC" id="6.3.2.13"/>
    </reaction>
</comment>
<comment type="cofactor">
    <cofactor evidence="1">
        <name>Mg(2+)</name>
        <dbReference type="ChEBI" id="CHEBI:18420"/>
    </cofactor>
</comment>
<comment type="pathway">
    <text evidence="1">Cell wall biogenesis; peptidoglycan biosynthesis.</text>
</comment>
<comment type="subcellular location">
    <subcellularLocation>
        <location evidence="1">Cytoplasm</location>
    </subcellularLocation>
</comment>
<comment type="PTM">
    <text evidence="1">Carboxylation is probably crucial for Mg(2+) binding and, consequently, for the gamma-phosphate positioning of ATP.</text>
</comment>
<comment type="similarity">
    <text evidence="1">Belongs to the MurCDEF family. MurE subfamily.</text>
</comment>
<comment type="sequence caution" evidence="2">
    <conflict type="erroneous initiation">
        <sequence resource="EMBL-CDS" id="CAF20503"/>
    </conflict>
</comment>
<proteinExistence type="inferred from homology"/>
<feature type="chain" id="PRO_0000101890" description="UDP-N-acetylmuramoyl-L-alanyl-D-glutamate--2,6-diaminopimelate ligase">
    <location>
        <begin position="1"/>
        <end position="517"/>
    </location>
</feature>
<feature type="short sequence motif" description="Meso-diaminopimelate recognition motif">
    <location>
        <begin position="418"/>
        <end position="421"/>
    </location>
</feature>
<feature type="binding site" evidence="1">
    <location>
        <position position="34"/>
    </location>
    <ligand>
        <name>UDP-N-acetyl-alpha-D-muramoyl-L-alanyl-D-glutamate</name>
        <dbReference type="ChEBI" id="CHEBI:83900"/>
    </ligand>
</feature>
<feature type="binding site" evidence="1">
    <location>
        <position position="36"/>
    </location>
    <ligand>
        <name>UDP-N-acetyl-alpha-D-muramoyl-L-alanyl-D-glutamate</name>
        <dbReference type="ChEBI" id="CHEBI:83900"/>
    </ligand>
</feature>
<feature type="binding site" evidence="1">
    <location>
        <begin position="122"/>
        <end position="128"/>
    </location>
    <ligand>
        <name>ATP</name>
        <dbReference type="ChEBI" id="CHEBI:30616"/>
    </ligand>
</feature>
<feature type="binding site" evidence="1">
    <location>
        <begin position="164"/>
        <end position="165"/>
    </location>
    <ligand>
        <name>UDP-N-acetyl-alpha-D-muramoyl-L-alanyl-D-glutamate</name>
        <dbReference type="ChEBI" id="CHEBI:83900"/>
    </ligand>
</feature>
<feature type="binding site" evidence="1">
    <location>
        <position position="191"/>
    </location>
    <ligand>
        <name>UDP-N-acetyl-alpha-D-muramoyl-L-alanyl-D-glutamate</name>
        <dbReference type="ChEBI" id="CHEBI:83900"/>
    </ligand>
</feature>
<feature type="binding site" evidence="1">
    <location>
        <position position="199"/>
    </location>
    <ligand>
        <name>UDP-N-acetyl-alpha-D-muramoyl-L-alanyl-D-glutamate</name>
        <dbReference type="ChEBI" id="CHEBI:83900"/>
    </ligand>
</feature>
<feature type="binding site" evidence="1">
    <location>
        <position position="394"/>
    </location>
    <ligand>
        <name>meso-2,6-diaminopimelate</name>
        <dbReference type="ChEBI" id="CHEBI:57791"/>
    </ligand>
</feature>
<feature type="binding site" evidence="1">
    <location>
        <begin position="418"/>
        <end position="421"/>
    </location>
    <ligand>
        <name>meso-2,6-diaminopimelate</name>
        <dbReference type="ChEBI" id="CHEBI:57791"/>
    </ligand>
</feature>
<feature type="binding site" evidence="1">
    <location>
        <position position="476"/>
    </location>
    <ligand>
        <name>meso-2,6-diaminopimelate</name>
        <dbReference type="ChEBI" id="CHEBI:57791"/>
    </ligand>
</feature>
<feature type="binding site" evidence="1">
    <location>
        <position position="480"/>
    </location>
    <ligand>
        <name>meso-2,6-diaminopimelate</name>
        <dbReference type="ChEBI" id="CHEBI:57791"/>
    </ligand>
</feature>
<feature type="modified residue" description="N6-carboxylysine" evidence="1">
    <location>
        <position position="231"/>
    </location>
</feature>
<accession>Q8NNN0</accession>
<keyword id="KW-0067">ATP-binding</keyword>
<keyword id="KW-0131">Cell cycle</keyword>
<keyword id="KW-0132">Cell division</keyword>
<keyword id="KW-0133">Cell shape</keyword>
<keyword id="KW-0961">Cell wall biogenesis/degradation</keyword>
<keyword id="KW-0963">Cytoplasm</keyword>
<keyword id="KW-0436">Ligase</keyword>
<keyword id="KW-0460">Magnesium</keyword>
<keyword id="KW-0547">Nucleotide-binding</keyword>
<keyword id="KW-0573">Peptidoglycan synthesis</keyword>
<keyword id="KW-1185">Reference proteome</keyword>
<evidence type="ECO:0000255" key="1">
    <source>
        <dbReference type="HAMAP-Rule" id="MF_00208"/>
    </source>
</evidence>
<evidence type="ECO:0000305" key="2"/>
<gene>
    <name evidence="1" type="primary">murE</name>
    <name type="ordered locus">Cgl2163</name>
    <name type="ordered locus">cg2374</name>
</gene>
<dbReference type="EC" id="6.3.2.13" evidence="1"/>
<dbReference type="EMBL" id="BA000036">
    <property type="protein sequence ID" value="BAB99556.1"/>
    <property type="molecule type" value="Genomic_DNA"/>
</dbReference>
<dbReference type="EMBL" id="BX927154">
    <property type="protein sequence ID" value="CAF20503.1"/>
    <property type="status" value="ALT_INIT"/>
    <property type="molecule type" value="Genomic_DNA"/>
</dbReference>
<dbReference type="RefSeq" id="NP_601365.1">
    <property type="nucleotide sequence ID" value="NC_003450.3"/>
</dbReference>
<dbReference type="SMR" id="Q8NNN0"/>
<dbReference type="STRING" id="196627.cg2374"/>
<dbReference type="KEGG" id="cgb:cg2374"/>
<dbReference type="KEGG" id="cgl:Cgl2163"/>
<dbReference type="PATRIC" id="fig|196627.13.peg.2101"/>
<dbReference type="eggNOG" id="COG0769">
    <property type="taxonomic scope" value="Bacteria"/>
</dbReference>
<dbReference type="HOGENOM" id="CLU_022291_4_1_11"/>
<dbReference type="OrthoDB" id="9800958at2"/>
<dbReference type="BioCyc" id="CORYNE:G18NG-11755-MONOMER"/>
<dbReference type="UniPathway" id="UPA00219"/>
<dbReference type="Proteomes" id="UP000000582">
    <property type="component" value="Chromosome"/>
</dbReference>
<dbReference type="Proteomes" id="UP000001009">
    <property type="component" value="Chromosome"/>
</dbReference>
<dbReference type="GO" id="GO:0005737">
    <property type="term" value="C:cytoplasm"/>
    <property type="evidence" value="ECO:0007669"/>
    <property type="project" value="UniProtKB-SubCell"/>
</dbReference>
<dbReference type="GO" id="GO:0005524">
    <property type="term" value="F:ATP binding"/>
    <property type="evidence" value="ECO:0007669"/>
    <property type="project" value="UniProtKB-UniRule"/>
</dbReference>
<dbReference type="GO" id="GO:0000287">
    <property type="term" value="F:magnesium ion binding"/>
    <property type="evidence" value="ECO:0007669"/>
    <property type="project" value="UniProtKB-UniRule"/>
</dbReference>
<dbReference type="GO" id="GO:0008765">
    <property type="term" value="F:UDP-N-acetylmuramoylalanyl-D-glutamate-2,6-diaminopimelate ligase activity"/>
    <property type="evidence" value="ECO:0007669"/>
    <property type="project" value="UniProtKB-UniRule"/>
</dbReference>
<dbReference type="GO" id="GO:0051301">
    <property type="term" value="P:cell division"/>
    <property type="evidence" value="ECO:0007669"/>
    <property type="project" value="UniProtKB-KW"/>
</dbReference>
<dbReference type="GO" id="GO:0071555">
    <property type="term" value="P:cell wall organization"/>
    <property type="evidence" value="ECO:0007669"/>
    <property type="project" value="UniProtKB-KW"/>
</dbReference>
<dbReference type="GO" id="GO:0009252">
    <property type="term" value="P:peptidoglycan biosynthetic process"/>
    <property type="evidence" value="ECO:0007669"/>
    <property type="project" value="UniProtKB-UniRule"/>
</dbReference>
<dbReference type="GO" id="GO:0008360">
    <property type="term" value="P:regulation of cell shape"/>
    <property type="evidence" value="ECO:0007669"/>
    <property type="project" value="UniProtKB-KW"/>
</dbReference>
<dbReference type="Gene3D" id="3.90.190.20">
    <property type="entry name" value="Mur ligase, C-terminal domain"/>
    <property type="match status" value="1"/>
</dbReference>
<dbReference type="Gene3D" id="3.40.1190.10">
    <property type="entry name" value="Mur-like, catalytic domain"/>
    <property type="match status" value="1"/>
</dbReference>
<dbReference type="Gene3D" id="3.40.1390.10">
    <property type="entry name" value="MurE/MurF, N-terminal domain"/>
    <property type="match status" value="1"/>
</dbReference>
<dbReference type="HAMAP" id="MF_00208">
    <property type="entry name" value="MurE"/>
    <property type="match status" value="1"/>
</dbReference>
<dbReference type="InterPro" id="IPR036565">
    <property type="entry name" value="Mur-like_cat_sf"/>
</dbReference>
<dbReference type="InterPro" id="IPR004101">
    <property type="entry name" value="Mur_ligase_C"/>
</dbReference>
<dbReference type="InterPro" id="IPR036615">
    <property type="entry name" value="Mur_ligase_C_dom_sf"/>
</dbReference>
<dbReference type="InterPro" id="IPR013221">
    <property type="entry name" value="Mur_ligase_cen"/>
</dbReference>
<dbReference type="InterPro" id="IPR035911">
    <property type="entry name" value="MurE/MurF_N"/>
</dbReference>
<dbReference type="InterPro" id="IPR005761">
    <property type="entry name" value="UDP-N-AcMur-Glu-dNH2Pim_ligase"/>
</dbReference>
<dbReference type="NCBIfam" id="TIGR01085">
    <property type="entry name" value="murE"/>
    <property type="match status" value="1"/>
</dbReference>
<dbReference type="NCBIfam" id="NF001124">
    <property type="entry name" value="PRK00139.1-2"/>
    <property type="match status" value="1"/>
</dbReference>
<dbReference type="NCBIfam" id="NF001126">
    <property type="entry name" value="PRK00139.1-4"/>
    <property type="match status" value="1"/>
</dbReference>
<dbReference type="PANTHER" id="PTHR23135">
    <property type="entry name" value="MUR LIGASE FAMILY MEMBER"/>
    <property type="match status" value="1"/>
</dbReference>
<dbReference type="PANTHER" id="PTHR23135:SF4">
    <property type="entry name" value="UDP-N-ACETYLMURAMOYL-L-ALANYL-D-GLUTAMATE--2,6-DIAMINOPIMELATE LIGASE MURE HOMOLOG, CHLOROPLASTIC"/>
    <property type="match status" value="1"/>
</dbReference>
<dbReference type="Pfam" id="PF02875">
    <property type="entry name" value="Mur_ligase_C"/>
    <property type="match status" value="1"/>
</dbReference>
<dbReference type="Pfam" id="PF08245">
    <property type="entry name" value="Mur_ligase_M"/>
    <property type="match status" value="1"/>
</dbReference>
<dbReference type="SUPFAM" id="SSF53623">
    <property type="entry name" value="MurD-like peptide ligases, catalytic domain"/>
    <property type="match status" value="1"/>
</dbReference>
<dbReference type="SUPFAM" id="SSF53244">
    <property type="entry name" value="MurD-like peptide ligases, peptide-binding domain"/>
    <property type="match status" value="1"/>
</dbReference>
<dbReference type="SUPFAM" id="SSF63418">
    <property type="entry name" value="MurE/MurF N-terminal domain"/>
    <property type="match status" value="1"/>
</dbReference>
<reference key="1">
    <citation type="journal article" date="2003" name="Appl. Microbiol. Biotechnol.">
        <title>The Corynebacterium glutamicum genome: features and impacts on biotechnological processes.</title>
        <authorList>
            <person name="Ikeda M."/>
            <person name="Nakagawa S."/>
        </authorList>
    </citation>
    <scope>NUCLEOTIDE SEQUENCE [LARGE SCALE GENOMIC DNA]</scope>
    <source>
        <strain>ATCC 13032 / DSM 20300 / JCM 1318 / BCRC 11384 / CCUG 27702 / LMG 3730 / NBRC 12168 / NCIMB 10025 / NRRL B-2784 / 534</strain>
    </source>
</reference>
<reference key="2">
    <citation type="journal article" date="2003" name="J. Biotechnol.">
        <title>The complete Corynebacterium glutamicum ATCC 13032 genome sequence and its impact on the production of L-aspartate-derived amino acids and vitamins.</title>
        <authorList>
            <person name="Kalinowski J."/>
            <person name="Bathe B."/>
            <person name="Bartels D."/>
            <person name="Bischoff N."/>
            <person name="Bott M."/>
            <person name="Burkovski A."/>
            <person name="Dusch N."/>
            <person name="Eggeling L."/>
            <person name="Eikmanns B.J."/>
            <person name="Gaigalat L."/>
            <person name="Goesmann A."/>
            <person name="Hartmann M."/>
            <person name="Huthmacher K."/>
            <person name="Kraemer R."/>
            <person name="Linke B."/>
            <person name="McHardy A.C."/>
            <person name="Meyer F."/>
            <person name="Moeckel B."/>
            <person name="Pfefferle W."/>
            <person name="Puehler A."/>
            <person name="Rey D.A."/>
            <person name="Rueckert C."/>
            <person name="Rupp O."/>
            <person name="Sahm H."/>
            <person name="Wendisch V.F."/>
            <person name="Wiegraebe I."/>
            <person name="Tauch A."/>
        </authorList>
    </citation>
    <scope>NUCLEOTIDE SEQUENCE [LARGE SCALE GENOMIC DNA]</scope>
    <source>
        <strain>ATCC 13032 / DSM 20300 / JCM 1318 / BCRC 11384 / CCUG 27702 / LMG 3730 / NBRC 12168 / NCIMB 10025 / NRRL B-2784 / 534</strain>
    </source>
</reference>
<protein>
    <recommendedName>
        <fullName evidence="1">UDP-N-acetylmuramoyl-L-alanyl-D-glutamate--2,6-diaminopimelate ligase</fullName>
        <ecNumber evidence="1">6.3.2.13</ecNumber>
    </recommendedName>
    <alternativeName>
        <fullName evidence="1">Meso-A2pm-adding enzyme</fullName>
    </alternativeName>
    <alternativeName>
        <fullName evidence="1">Meso-diaminopimelate-adding enzyme</fullName>
    </alternativeName>
    <alternativeName>
        <fullName evidence="1">UDP-MurNAc-L-Ala-D-Glu:meso-diaminopimelate ligase</fullName>
    </alternativeName>
    <alternativeName>
        <fullName evidence="1">UDP-MurNAc-tripeptide synthetase</fullName>
    </alternativeName>
    <alternativeName>
        <fullName evidence="1">UDP-N-acetylmuramyl-tripeptide synthetase</fullName>
    </alternativeName>
</protein>
<organism>
    <name type="scientific">Corynebacterium glutamicum (strain ATCC 13032 / DSM 20300 / JCM 1318 / BCRC 11384 / CCUG 27702 / LMG 3730 / NBRC 12168 / NCIMB 10025 / NRRL B-2784 / 534)</name>
    <dbReference type="NCBI Taxonomy" id="196627"/>
    <lineage>
        <taxon>Bacteria</taxon>
        <taxon>Bacillati</taxon>
        <taxon>Actinomycetota</taxon>
        <taxon>Actinomycetes</taxon>
        <taxon>Mycobacteriales</taxon>
        <taxon>Corynebacteriaceae</taxon>
        <taxon>Corynebacterium</taxon>
    </lineage>
</organism>